<evidence type="ECO:0000255" key="1">
    <source>
        <dbReference type="HAMAP-Rule" id="MF_00134"/>
    </source>
</evidence>
<organism>
    <name type="scientific">Geobacillus sp. (strain WCH70)</name>
    <dbReference type="NCBI Taxonomy" id="471223"/>
    <lineage>
        <taxon>Bacteria</taxon>
        <taxon>Bacillati</taxon>
        <taxon>Bacillota</taxon>
        <taxon>Bacilli</taxon>
        <taxon>Bacillales</taxon>
        <taxon>Anoxybacillaceae</taxon>
        <taxon>Geobacillus</taxon>
    </lineage>
</organism>
<proteinExistence type="inferred from homology"/>
<dbReference type="EC" id="4.1.1.48" evidence="1"/>
<dbReference type="EMBL" id="CP001638">
    <property type="protein sequence ID" value="ACS24851.1"/>
    <property type="molecule type" value="Genomic_DNA"/>
</dbReference>
<dbReference type="SMR" id="C5D3D6"/>
<dbReference type="STRING" id="471223.GWCH70_2141"/>
<dbReference type="KEGG" id="gwc:GWCH70_2141"/>
<dbReference type="eggNOG" id="COG0134">
    <property type="taxonomic scope" value="Bacteria"/>
</dbReference>
<dbReference type="HOGENOM" id="CLU_034247_2_0_9"/>
<dbReference type="OrthoDB" id="9804217at2"/>
<dbReference type="UniPathway" id="UPA00035">
    <property type="reaction ID" value="UER00043"/>
</dbReference>
<dbReference type="GO" id="GO:0004425">
    <property type="term" value="F:indole-3-glycerol-phosphate synthase activity"/>
    <property type="evidence" value="ECO:0007669"/>
    <property type="project" value="UniProtKB-UniRule"/>
</dbReference>
<dbReference type="GO" id="GO:0004640">
    <property type="term" value="F:phosphoribosylanthranilate isomerase activity"/>
    <property type="evidence" value="ECO:0007669"/>
    <property type="project" value="TreeGrafter"/>
</dbReference>
<dbReference type="GO" id="GO:0000162">
    <property type="term" value="P:L-tryptophan biosynthetic process"/>
    <property type="evidence" value="ECO:0007669"/>
    <property type="project" value="UniProtKB-UniRule"/>
</dbReference>
<dbReference type="CDD" id="cd00331">
    <property type="entry name" value="IGPS"/>
    <property type="match status" value="1"/>
</dbReference>
<dbReference type="FunFam" id="3.20.20.70:FF:000024">
    <property type="entry name" value="Indole-3-glycerol phosphate synthase"/>
    <property type="match status" value="1"/>
</dbReference>
<dbReference type="Gene3D" id="3.20.20.70">
    <property type="entry name" value="Aldolase class I"/>
    <property type="match status" value="1"/>
</dbReference>
<dbReference type="HAMAP" id="MF_00134_B">
    <property type="entry name" value="IGPS_B"/>
    <property type="match status" value="1"/>
</dbReference>
<dbReference type="InterPro" id="IPR013785">
    <property type="entry name" value="Aldolase_TIM"/>
</dbReference>
<dbReference type="InterPro" id="IPR045186">
    <property type="entry name" value="Indole-3-glycerol_P_synth"/>
</dbReference>
<dbReference type="InterPro" id="IPR013798">
    <property type="entry name" value="Indole-3-glycerol_P_synth_dom"/>
</dbReference>
<dbReference type="InterPro" id="IPR001468">
    <property type="entry name" value="Indole-3-GlycerolPSynthase_CS"/>
</dbReference>
<dbReference type="InterPro" id="IPR011060">
    <property type="entry name" value="RibuloseP-bd_barrel"/>
</dbReference>
<dbReference type="NCBIfam" id="NF001375">
    <property type="entry name" value="PRK00278.2-2"/>
    <property type="match status" value="1"/>
</dbReference>
<dbReference type="NCBIfam" id="NF001377">
    <property type="entry name" value="PRK00278.2-4"/>
    <property type="match status" value="1"/>
</dbReference>
<dbReference type="PANTHER" id="PTHR22854:SF2">
    <property type="entry name" value="INDOLE-3-GLYCEROL-PHOSPHATE SYNTHASE"/>
    <property type="match status" value="1"/>
</dbReference>
<dbReference type="PANTHER" id="PTHR22854">
    <property type="entry name" value="TRYPTOPHAN BIOSYNTHESIS PROTEIN"/>
    <property type="match status" value="1"/>
</dbReference>
<dbReference type="Pfam" id="PF00218">
    <property type="entry name" value="IGPS"/>
    <property type="match status" value="1"/>
</dbReference>
<dbReference type="SUPFAM" id="SSF51366">
    <property type="entry name" value="Ribulose-phoshate binding barrel"/>
    <property type="match status" value="1"/>
</dbReference>
<dbReference type="PROSITE" id="PS00614">
    <property type="entry name" value="IGPS"/>
    <property type="match status" value="1"/>
</dbReference>
<feature type="chain" id="PRO_1000203201" description="Indole-3-glycerol phosphate synthase">
    <location>
        <begin position="1"/>
        <end position="258"/>
    </location>
</feature>
<comment type="catalytic activity">
    <reaction evidence="1">
        <text>1-(2-carboxyphenylamino)-1-deoxy-D-ribulose 5-phosphate + H(+) = (1S,2R)-1-C-(indol-3-yl)glycerol 3-phosphate + CO2 + H2O</text>
        <dbReference type="Rhea" id="RHEA:23476"/>
        <dbReference type="ChEBI" id="CHEBI:15377"/>
        <dbReference type="ChEBI" id="CHEBI:15378"/>
        <dbReference type="ChEBI" id="CHEBI:16526"/>
        <dbReference type="ChEBI" id="CHEBI:58613"/>
        <dbReference type="ChEBI" id="CHEBI:58866"/>
        <dbReference type="EC" id="4.1.1.48"/>
    </reaction>
</comment>
<comment type="pathway">
    <text evidence="1">Amino-acid biosynthesis; L-tryptophan biosynthesis; L-tryptophan from chorismate: step 4/5.</text>
</comment>
<comment type="similarity">
    <text evidence="1">Belongs to the TrpC family.</text>
</comment>
<name>TRPC_GEOSW</name>
<accession>C5D3D6</accession>
<gene>
    <name evidence="1" type="primary">trpC</name>
    <name type="ordered locus">GWCH70_2141</name>
</gene>
<reference key="1">
    <citation type="submission" date="2009-06" db="EMBL/GenBank/DDBJ databases">
        <title>Complete sequence of chromosome of Geopacillus sp. WCH70.</title>
        <authorList>
            <consortium name="US DOE Joint Genome Institute"/>
            <person name="Lucas S."/>
            <person name="Copeland A."/>
            <person name="Lapidus A."/>
            <person name="Glavina del Rio T."/>
            <person name="Dalin E."/>
            <person name="Tice H."/>
            <person name="Bruce D."/>
            <person name="Goodwin L."/>
            <person name="Pitluck S."/>
            <person name="Chertkov O."/>
            <person name="Brettin T."/>
            <person name="Detter J.C."/>
            <person name="Han C."/>
            <person name="Larimer F."/>
            <person name="Land M."/>
            <person name="Hauser L."/>
            <person name="Kyrpides N."/>
            <person name="Mikhailova N."/>
            <person name="Brumm P."/>
            <person name="Mead D.A."/>
            <person name="Richardson P."/>
        </authorList>
    </citation>
    <scope>NUCLEOTIDE SEQUENCE [LARGE SCALE GENOMIC DNA]</scope>
    <source>
        <strain>WCH70</strain>
    </source>
</reference>
<keyword id="KW-0028">Amino-acid biosynthesis</keyword>
<keyword id="KW-0057">Aromatic amino acid biosynthesis</keyword>
<keyword id="KW-0210">Decarboxylase</keyword>
<keyword id="KW-0456">Lyase</keyword>
<keyword id="KW-0822">Tryptophan biosynthesis</keyword>
<protein>
    <recommendedName>
        <fullName evidence="1">Indole-3-glycerol phosphate synthase</fullName>
        <shortName evidence="1">IGPS</shortName>
        <ecNumber evidence="1">4.1.1.48</ecNumber>
    </recommendedName>
</protein>
<sequence>MLEQIIATKKKEIETLTLSKPLQNVQRRSLSAALKKPNRSIGLIAEVKKASPSKGLIRPDFHPVAIAKAYEKAGADAISVLTDERYFQGHRGYLSDIKQAVQLPILRKDFIIDRIQIEESVRIGADAILLIGEALPAKTLYELYQEAYDKGLECLVEVHQRETLENILDIFTPEIIGINNRDLHTFVTSLETTSKVIPFVPSGSVIVSESGISTSHDLKTVQTYGADAVLVGESLMRKDDVEAAIYELFREVESIAGP</sequence>